<feature type="chain" id="PRO_0000113525" description="Serine hydroxymethyltransferase">
    <location>
        <begin position="1"/>
        <end position="413"/>
    </location>
</feature>
<feature type="binding site" evidence="1">
    <location>
        <position position="117"/>
    </location>
    <ligand>
        <name>(6S)-5,6,7,8-tetrahydrofolate</name>
        <dbReference type="ChEBI" id="CHEBI:57453"/>
    </ligand>
</feature>
<feature type="binding site" evidence="1">
    <location>
        <begin position="121"/>
        <end position="123"/>
    </location>
    <ligand>
        <name>(6S)-5,6,7,8-tetrahydrofolate</name>
        <dbReference type="ChEBI" id="CHEBI:57453"/>
    </ligand>
</feature>
<feature type="binding site" evidence="1">
    <location>
        <position position="239"/>
    </location>
    <ligand>
        <name>(6S)-5,6,7,8-tetrahydrofolate</name>
        <dbReference type="ChEBI" id="CHEBI:57453"/>
    </ligand>
</feature>
<feature type="binding site" evidence="1">
    <location>
        <begin position="349"/>
        <end position="351"/>
    </location>
    <ligand>
        <name>(6S)-5,6,7,8-tetrahydrofolate</name>
        <dbReference type="ChEBI" id="CHEBI:57453"/>
    </ligand>
</feature>
<feature type="site" description="Plays an important role in substrate specificity" evidence="1">
    <location>
        <position position="225"/>
    </location>
</feature>
<feature type="modified residue" description="N6-(pyridoxal phosphate)lysine" evidence="1">
    <location>
        <position position="226"/>
    </location>
</feature>
<comment type="function">
    <text evidence="1">Catalyzes the reversible interconversion of serine and glycine with tetrahydrofolate (THF) serving as the one-carbon carrier. This reaction serves as the major source of one-carbon groups required for the biosynthesis of purines, thymidylate, methionine, and other important biomolecules. Also exhibits THF-independent aldolase activity toward beta-hydroxyamino acids, producing glycine and aldehydes, via a retro-aldol mechanism.</text>
</comment>
<comment type="catalytic activity">
    <reaction evidence="1">
        <text>(6R)-5,10-methylene-5,6,7,8-tetrahydrofolate + glycine + H2O = (6S)-5,6,7,8-tetrahydrofolate + L-serine</text>
        <dbReference type="Rhea" id="RHEA:15481"/>
        <dbReference type="ChEBI" id="CHEBI:15377"/>
        <dbReference type="ChEBI" id="CHEBI:15636"/>
        <dbReference type="ChEBI" id="CHEBI:33384"/>
        <dbReference type="ChEBI" id="CHEBI:57305"/>
        <dbReference type="ChEBI" id="CHEBI:57453"/>
        <dbReference type="EC" id="2.1.2.1"/>
    </reaction>
</comment>
<comment type="cofactor">
    <cofactor evidence="1">
        <name>pyridoxal 5'-phosphate</name>
        <dbReference type="ChEBI" id="CHEBI:597326"/>
    </cofactor>
</comment>
<comment type="pathway">
    <text evidence="1">One-carbon metabolism; tetrahydrofolate interconversion.</text>
</comment>
<comment type="pathway">
    <text evidence="1">Amino-acid biosynthesis; glycine biosynthesis; glycine from L-serine: step 1/1.</text>
</comment>
<comment type="subunit">
    <text evidence="1">Homodimer.</text>
</comment>
<comment type="subcellular location">
    <subcellularLocation>
        <location evidence="1">Cytoplasm</location>
    </subcellularLocation>
</comment>
<comment type="similarity">
    <text evidence="1">Belongs to the SHMT family.</text>
</comment>
<dbReference type="EC" id="2.1.2.1" evidence="1"/>
<dbReference type="EMBL" id="AE017194">
    <property type="protein sequence ID" value="AAS44341.1"/>
    <property type="molecule type" value="Genomic_DNA"/>
</dbReference>
<dbReference type="SMR" id="Q72XD7"/>
<dbReference type="KEGG" id="bca:BCE_5441"/>
<dbReference type="HOGENOM" id="CLU_022477_2_1_9"/>
<dbReference type="UniPathway" id="UPA00193"/>
<dbReference type="UniPathway" id="UPA00288">
    <property type="reaction ID" value="UER01023"/>
</dbReference>
<dbReference type="Proteomes" id="UP000002527">
    <property type="component" value="Chromosome"/>
</dbReference>
<dbReference type="GO" id="GO:0005829">
    <property type="term" value="C:cytosol"/>
    <property type="evidence" value="ECO:0007669"/>
    <property type="project" value="TreeGrafter"/>
</dbReference>
<dbReference type="GO" id="GO:0004372">
    <property type="term" value="F:glycine hydroxymethyltransferase activity"/>
    <property type="evidence" value="ECO:0007669"/>
    <property type="project" value="UniProtKB-UniRule"/>
</dbReference>
<dbReference type="GO" id="GO:0030170">
    <property type="term" value="F:pyridoxal phosphate binding"/>
    <property type="evidence" value="ECO:0007669"/>
    <property type="project" value="UniProtKB-UniRule"/>
</dbReference>
<dbReference type="GO" id="GO:0019264">
    <property type="term" value="P:glycine biosynthetic process from serine"/>
    <property type="evidence" value="ECO:0007669"/>
    <property type="project" value="UniProtKB-UniRule"/>
</dbReference>
<dbReference type="GO" id="GO:0035999">
    <property type="term" value="P:tetrahydrofolate interconversion"/>
    <property type="evidence" value="ECO:0007669"/>
    <property type="project" value="UniProtKB-UniRule"/>
</dbReference>
<dbReference type="CDD" id="cd00378">
    <property type="entry name" value="SHMT"/>
    <property type="match status" value="1"/>
</dbReference>
<dbReference type="FunFam" id="3.40.640.10:FF:000001">
    <property type="entry name" value="Serine hydroxymethyltransferase"/>
    <property type="match status" value="1"/>
</dbReference>
<dbReference type="FunFam" id="3.90.1150.10:FF:000003">
    <property type="entry name" value="Serine hydroxymethyltransferase"/>
    <property type="match status" value="1"/>
</dbReference>
<dbReference type="Gene3D" id="3.90.1150.10">
    <property type="entry name" value="Aspartate Aminotransferase, domain 1"/>
    <property type="match status" value="1"/>
</dbReference>
<dbReference type="Gene3D" id="3.40.640.10">
    <property type="entry name" value="Type I PLP-dependent aspartate aminotransferase-like (Major domain)"/>
    <property type="match status" value="1"/>
</dbReference>
<dbReference type="HAMAP" id="MF_00051">
    <property type="entry name" value="SHMT"/>
    <property type="match status" value="1"/>
</dbReference>
<dbReference type="InterPro" id="IPR015424">
    <property type="entry name" value="PyrdxlP-dep_Trfase"/>
</dbReference>
<dbReference type="InterPro" id="IPR015421">
    <property type="entry name" value="PyrdxlP-dep_Trfase_major"/>
</dbReference>
<dbReference type="InterPro" id="IPR015422">
    <property type="entry name" value="PyrdxlP-dep_Trfase_small"/>
</dbReference>
<dbReference type="InterPro" id="IPR001085">
    <property type="entry name" value="Ser_HO-MeTrfase"/>
</dbReference>
<dbReference type="InterPro" id="IPR049943">
    <property type="entry name" value="Ser_HO-MeTrfase-like"/>
</dbReference>
<dbReference type="InterPro" id="IPR019798">
    <property type="entry name" value="Ser_HO-MeTrfase_PLP_BS"/>
</dbReference>
<dbReference type="InterPro" id="IPR039429">
    <property type="entry name" value="SHMT-like_dom"/>
</dbReference>
<dbReference type="NCBIfam" id="NF000586">
    <property type="entry name" value="PRK00011.1"/>
    <property type="match status" value="1"/>
</dbReference>
<dbReference type="PANTHER" id="PTHR11680">
    <property type="entry name" value="SERINE HYDROXYMETHYLTRANSFERASE"/>
    <property type="match status" value="1"/>
</dbReference>
<dbReference type="PANTHER" id="PTHR11680:SF35">
    <property type="entry name" value="SERINE HYDROXYMETHYLTRANSFERASE 1"/>
    <property type="match status" value="1"/>
</dbReference>
<dbReference type="Pfam" id="PF00464">
    <property type="entry name" value="SHMT"/>
    <property type="match status" value="1"/>
</dbReference>
<dbReference type="PIRSF" id="PIRSF000412">
    <property type="entry name" value="SHMT"/>
    <property type="match status" value="1"/>
</dbReference>
<dbReference type="SUPFAM" id="SSF53383">
    <property type="entry name" value="PLP-dependent transferases"/>
    <property type="match status" value="1"/>
</dbReference>
<dbReference type="PROSITE" id="PS00096">
    <property type="entry name" value="SHMT"/>
    <property type="match status" value="1"/>
</dbReference>
<organism>
    <name type="scientific">Bacillus cereus (strain ATCC 10987 / NRS 248)</name>
    <dbReference type="NCBI Taxonomy" id="222523"/>
    <lineage>
        <taxon>Bacteria</taxon>
        <taxon>Bacillati</taxon>
        <taxon>Bacillota</taxon>
        <taxon>Bacilli</taxon>
        <taxon>Bacillales</taxon>
        <taxon>Bacillaceae</taxon>
        <taxon>Bacillus</taxon>
        <taxon>Bacillus cereus group</taxon>
    </lineage>
</organism>
<reference key="1">
    <citation type="journal article" date="2004" name="Nucleic Acids Res.">
        <title>The genome sequence of Bacillus cereus ATCC 10987 reveals metabolic adaptations and a large plasmid related to Bacillus anthracis pXO1.</title>
        <authorList>
            <person name="Rasko D.A."/>
            <person name="Ravel J."/>
            <person name="Oekstad O.A."/>
            <person name="Helgason E."/>
            <person name="Cer R.Z."/>
            <person name="Jiang L."/>
            <person name="Shores K.A."/>
            <person name="Fouts D.E."/>
            <person name="Tourasse N.J."/>
            <person name="Angiuoli S.V."/>
            <person name="Kolonay J.F."/>
            <person name="Nelson W.C."/>
            <person name="Kolstoe A.-B."/>
            <person name="Fraser C.M."/>
            <person name="Read T.D."/>
        </authorList>
    </citation>
    <scope>NUCLEOTIDE SEQUENCE [LARGE SCALE GENOMIC DNA]</scope>
    <source>
        <strain>ATCC 10987 / NRS 248</strain>
    </source>
</reference>
<name>GLYA_BACC1</name>
<accession>Q72XD7</accession>
<keyword id="KW-0028">Amino-acid biosynthesis</keyword>
<keyword id="KW-0963">Cytoplasm</keyword>
<keyword id="KW-0554">One-carbon metabolism</keyword>
<keyword id="KW-0663">Pyridoxal phosphate</keyword>
<keyword id="KW-0808">Transferase</keyword>
<proteinExistence type="inferred from homology"/>
<gene>
    <name evidence="1" type="primary">glyA</name>
    <name type="ordered locus">BCE_5441</name>
</gene>
<sequence>MDHLKRQDEKVFAAIEAELGRQRSKIELIASENFVSEAVMEAQGSVLTNKYAEGYPGKRYYGGCEHVDVVEDIARDRVKEIFGAEHVNVQPHSGAQANMAVYFTILEQGDTVLGMNLSHGGHLTHGSPVNFSGVQYNFVEYGVDAESHRINYDDVLAKAKEHKPKLIVAGASAYPRVIDFKRFREIADEVGAYLMVDMAHIAGLVAAGLHPNPVPHAHFVTTTTHKTLRGPRGGMILCEEQFAKQIDKSIFPGIQGGPLMHVIAAKAVAFGEALQDDFKTYAQNIINNANRLAEGLQKEGLTLVSGGTDNHLILIDVRNLEITGKVAEHVLDEVGITVNKNTIPFETASPFVTSGVRIGTAAVTSRGFGLEEMDEIASLIAYTLKNHENEAALEEARKRVEALTSKFPMYTDL</sequence>
<evidence type="ECO:0000255" key="1">
    <source>
        <dbReference type="HAMAP-Rule" id="MF_00051"/>
    </source>
</evidence>
<protein>
    <recommendedName>
        <fullName evidence="1">Serine hydroxymethyltransferase</fullName>
        <shortName evidence="1">SHMT</shortName>
        <shortName evidence="1">Serine methylase</shortName>
        <ecNumber evidence="1">2.1.2.1</ecNumber>
    </recommendedName>
</protein>